<name>NU2M_SYMSY</name>
<protein>
    <recommendedName>
        <fullName evidence="1">NADH-ubiquinone oxidoreductase chain 2</fullName>
        <ecNumber evidence="1">7.1.1.2</ecNumber>
    </recommendedName>
    <alternativeName>
        <fullName>NADH dehydrogenase subunit 2</fullName>
    </alternativeName>
</protein>
<organism>
    <name type="scientific">Symphalangus syndactylus</name>
    <name type="common">Siamang</name>
    <name type="synonym">Hylobates syndactylus</name>
    <dbReference type="NCBI Taxonomy" id="9590"/>
    <lineage>
        <taxon>Eukaryota</taxon>
        <taxon>Metazoa</taxon>
        <taxon>Chordata</taxon>
        <taxon>Craniata</taxon>
        <taxon>Vertebrata</taxon>
        <taxon>Euteleostomi</taxon>
        <taxon>Mammalia</taxon>
        <taxon>Eutheria</taxon>
        <taxon>Euarchontoglires</taxon>
        <taxon>Primates</taxon>
        <taxon>Haplorrhini</taxon>
        <taxon>Catarrhini</taxon>
        <taxon>Hylobatidae</taxon>
        <taxon>Symphalangus</taxon>
    </lineage>
</organism>
<comment type="function">
    <text evidence="1">Core subunit of the mitochondrial membrane respiratory chain NADH dehydrogenase (Complex I) which catalyzes electron transfer from NADH through the respiratory chain, using ubiquinone as an electron acceptor. Essential for the catalytic activity and assembly of complex I.</text>
</comment>
<comment type="catalytic activity">
    <reaction evidence="1">
        <text>a ubiquinone + NADH + 5 H(+)(in) = a ubiquinol + NAD(+) + 4 H(+)(out)</text>
        <dbReference type="Rhea" id="RHEA:29091"/>
        <dbReference type="Rhea" id="RHEA-COMP:9565"/>
        <dbReference type="Rhea" id="RHEA-COMP:9566"/>
        <dbReference type="ChEBI" id="CHEBI:15378"/>
        <dbReference type="ChEBI" id="CHEBI:16389"/>
        <dbReference type="ChEBI" id="CHEBI:17976"/>
        <dbReference type="ChEBI" id="CHEBI:57540"/>
        <dbReference type="ChEBI" id="CHEBI:57945"/>
        <dbReference type="EC" id="7.1.1.2"/>
    </reaction>
</comment>
<comment type="subunit">
    <text evidence="1 2">Core subunit of respiratory chain NADH dehydrogenase (Complex I) which is composed of 45 different subunits. Interacts with TMEM242 (By similarity).</text>
</comment>
<comment type="subcellular location">
    <subcellularLocation>
        <location evidence="2">Mitochondrion inner membrane</location>
        <topology evidence="3">Multi-pass membrane protein</topology>
    </subcellularLocation>
</comment>
<comment type="similarity">
    <text evidence="4">Belongs to the complex I subunit 2 family.</text>
</comment>
<evidence type="ECO:0000250" key="1">
    <source>
        <dbReference type="UniProtKB" id="P03891"/>
    </source>
</evidence>
<evidence type="ECO:0000250" key="2">
    <source>
        <dbReference type="UniProtKB" id="P03892"/>
    </source>
</evidence>
<evidence type="ECO:0000255" key="3"/>
<evidence type="ECO:0000305" key="4"/>
<sequence length="347" mass="38669">MNPLAQPIIYSTIFAGTLITASSSHWFLAWVGLEMNMLAFIPVLTKKMNPRSTEAAIKYFLVQATASMILMMAILSNNLLSGQWTTTNITNQYSSLMILTALAMKLGMAPFHFWVPEVTQGTTLTSGLLLLTWQKLAPISIMYQIFPVMNVNILLTFSILSIMVGSWGGLNQTQLRKILAYSSITHVGWMTAVLPYNPNITIFNLTIYIVLTTTAFLALNLNSSTTTLLLSRSWNKLTWLLPLIPSTLLSLGGLPPLTGFLPKWLVIEELTKNGTLIIPTIMAIVTLINLYFYMRLIYSTSITLFPTSNNVKMKWQFENMKPTLLLPTLTILTTLLLPIAPLTFPAP</sequence>
<proteinExistence type="inferred from homology"/>
<reference key="1">
    <citation type="journal article" date="1992" name="J. Mol. Evol.">
        <title>Man's place in Hominoidea revealed by mitochondrial DNA genealogy.</title>
        <authorList>
            <person name="Horai S."/>
            <person name="Satta Y."/>
            <person name="Hayasaka K."/>
            <person name="Kondo R."/>
            <person name="Inoue T."/>
            <person name="Ishida T."/>
            <person name="Hayashi S."/>
            <person name="Takahata N."/>
        </authorList>
    </citation>
    <scope>NUCLEOTIDE SEQUENCE [GENOMIC DNA]</scope>
</reference>
<gene>
    <name evidence="1" type="primary">MT-ND2</name>
    <name type="synonym">MTND2</name>
    <name type="synonym">NADH2</name>
    <name type="synonym">ND2</name>
</gene>
<feature type="chain" id="PRO_0000117597" description="NADH-ubiquinone oxidoreductase chain 2">
    <location>
        <begin position="1"/>
        <end position="347"/>
    </location>
</feature>
<feature type="transmembrane region" description="Helical" evidence="3">
    <location>
        <begin position="1"/>
        <end position="21"/>
    </location>
</feature>
<feature type="transmembrane region" description="Helical" evidence="3">
    <location>
        <begin position="25"/>
        <end position="45"/>
    </location>
</feature>
<feature type="transmembrane region" description="Helical" evidence="3">
    <location>
        <begin position="55"/>
        <end position="75"/>
    </location>
</feature>
<feature type="transmembrane region" description="Helical" evidence="3">
    <location>
        <begin position="96"/>
        <end position="116"/>
    </location>
</feature>
<feature type="transmembrane region" description="Helical" evidence="3">
    <location>
        <begin position="123"/>
        <end position="143"/>
    </location>
</feature>
<feature type="transmembrane region" description="Helical" evidence="3">
    <location>
        <begin position="145"/>
        <end position="165"/>
    </location>
</feature>
<feature type="transmembrane region" description="Helical" evidence="3">
    <location>
        <begin position="178"/>
        <end position="198"/>
    </location>
</feature>
<feature type="transmembrane region" description="Helical" evidence="3">
    <location>
        <begin position="199"/>
        <end position="219"/>
    </location>
</feature>
<feature type="transmembrane region" description="Helical" evidence="3">
    <location>
        <begin position="237"/>
        <end position="257"/>
    </location>
</feature>
<feature type="transmembrane region" description="Helical" evidence="3">
    <location>
        <begin position="274"/>
        <end position="294"/>
    </location>
</feature>
<feature type="transmembrane region" description="Helical" evidence="3">
    <location>
        <begin position="324"/>
        <end position="344"/>
    </location>
</feature>
<accession>Q34799</accession>
<keyword id="KW-0249">Electron transport</keyword>
<keyword id="KW-0472">Membrane</keyword>
<keyword id="KW-0496">Mitochondrion</keyword>
<keyword id="KW-0999">Mitochondrion inner membrane</keyword>
<keyword id="KW-0520">NAD</keyword>
<keyword id="KW-0679">Respiratory chain</keyword>
<keyword id="KW-1278">Translocase</keyword>
<keyword id="KW-0812">Transmembrane</keyword>
<keyword id="KW-1133">Transmembrane helix</keyword>
<keyword id="KW-0813">Transport</keyword>
<keyword id="KW-0830">Ubiquinone</keyword>
<dbReference type="EC" id="7.1.1.2" evidence="1"/>
<dbReference type="EMBL" id="D38484">
    <property type="protein sequence ID" value="BAA07495.1"/>
    <property type="molecule type" value="Genomic_DNA"/>
</dbReference>
<dbReference type="RefSeq" id="YP_003587306.1">
    <property type="nucleotide sequence ID" value="NC_014047.1"/>
</dbReference>
<dbReference type="SMR" id="Q34799"/>
<dbReference type="GeneID" id="9072795"/>
<dbReference type="KEGG" id="ssyn:9072795"/>
<dbReference type="CTD" id="4536"/>
<dbReference type="GO" id="GO:0005743">
    <property type="term" value="C:mitochondrial inner membrane"/>
    <property type="evidence" value="ECO:0000250"/>
    <property type="project" value="UniProtKB"/>
</dbReference>
<dbReference type="GO" id="GO:0008137">
    <property type="term" value="F:NADH dehydrogenase (ubiquinone) activity"/>
    <property type="evidence" value="ECO:0000250"/>
    <property type="project" value="UniProtKB"/>
</dbReference>
<dbReference type="GO" id="GO:0006120">
    <property type="term" value="P:mitochondrial electron transport, NADH to ubiquinone"/>
    <property type="evidence" value="ECO:0000250"/>
    <property type="project" value="UniProtKB"/>
</dbReference>
<dbReference type="GO" id="GO:0032981">
    <property type="term" value="P:mitochondrial respiratory chain complex I assembly"/>
    <property type="evidence" value="ECO:0000250"/>
    <property type="project" value="UniProtKB"/>
</dbReference>
<dbReference type="InterPro" id="IPR050175">
    <property type="entry name" value="Complex_I_Subunit_2"/>
</dbReference>
<dbReference type="InterPro" id="IPR010933">
    <property type="entry name" value="NADH_DH_su2_C"/>
</dbReference>
<dbReference type="InterPro" id="IPR003917">
    <property type="entry name" value="NADH_UbQ_OxRdtase_chain2"/>
</dbReference>
<dbReference type="InterPro" id="IPR001750">
    <property type="entry name" value="ND/Mrp_TM"/>
</dbReference>
<dbReference type="PANTHER" id="PTHR46552">
    <property type="entry name" value="NADH-UBIQUINONE OXIDOREDUCTASE CHAIN 2"/>
    <property type="match status" value="1"/>
</dbReference>
<dbReference type="PANTHER" id="PTHR46552:SF1">
    <property type="entry name" value="NADH-UBIQUINONE OXIDOREDUCTASE CHAIN 2"/>
    <property type="match status" value="1"/>
</dbReference>
<dbReference type="Pfam" id="PF06444">
    <property type="entry name" value="NADH_dehy_S2_C"/>
    <property type="match status" value="1"/>
</dbReference>
<dbReference type="Pfam" id="PF00361">
    <property type="entry name" value="Proton_antipo_M"/>
    <property type="match status" value="1"/>
</dbReference>
<dbReference type="PRINTS" id="PR01436">
    <property type="entry name" value="NADHDHGNASE2"/>
</dbReference>
<geneLocation type="mitochondrion"/>